<comment type="tissue specificity">
    <text>Calcified shell.</text>
</comment>
<comment type="mass spectrometry" mass="12458.4" method="MALDI" evidence="1"/>
<name>CUPC3_CANPG</name>
<sequence length="117" mass="12461">NYGESGIVYPDGRLVQFTRAEADNIAEIGEAGVVMHDGTHVQFDRDMAAHHAGTPPQPMPERVTLDQSYGYSGIIMPDGNNRQFTAAESDNLVLVGPSGAVTADGKNVQFTDDGLPT</sequence>
<dbReference type="GO" id="GO:0042302">
    <property type="term" value="F:structural constituent of cuticle"/>
    <property type="evidence" value="ECO:0007669"/>
    <property type="project" value="UniProtKB-KW"/>
</dbReference>
<dbReference type="InterPro" id="IPR012539">
    <property type="entry name" value="Cuticle_1"/>
</dbReference>
<dbReference type="Pfam" id="PF08140">
    <property type="entry name" value="Cuticle_1"/>
    <property type="match status" value="2"/>
</dbReference>
<organism>
    <name type="scientific">Cancer pagurus</name>
    <name type="common">Rock crab</name>
    <dbReference type="NCBI Taxonomy" id="6755"/>
    <lineage>
        <taxon>Eukaryota</taxon>
        <taxon>Metazoa</taxon>
        <taxon>Ecdysozoa</taxon>
        <taxon>Arthropoda</taxon>
        <taxon>Crustacea</taxon>
        <taxon>Multicrustacea</taxon>
        <taxon>Malacostraca</taxon>
        <taxon>Eumalacostraca</taxon>
        <taxon>Eucarida</taxon>
        <taxon>Decapoda</taxon>
        <taxon>Pleocyemata</taxon>
        <taxon>Brachyura</taxon>
        <taxon>Eubrachyura</taxon>
        <taxon>Cancroidea</taxon>
        <taxon>Cancridae</taxon>
        <taxon>Cancer</taxon>
    </lineage>
</organism>
<feature type="chain" id="PRO_0000196163" description="Cuticle protein CP1246">
    <location>
        <begin position="1"/>
        <end position="117"/>
    </location>
</feature>
<feature type="repeat" description="1">
    <location>
        <begin position="1"/>
        <end position="17"/>
    </location>
</feature>
<feature type="repeat" description="2">
    <location>
        <begin position="26"/>
        <end position="43"/>
    </location>
</feature>
<feature type="repeat" description="3">
    <location>
        <begin position="67"/>
        <end position="84"/>
    </location>
</feature>
<feature type="repeat" description="4">
    <location>
        <begin position="93"/>
        <end position="110"/>
    </location>
</feature>
<keyword id="KW-0193">Cuticle</keyword>
<keyword id="KW-0903">Direct protein sequencing</keyword>
<keyword id="KW-0677">Repeat</keyword>
<proteinExistence type="evidence at protein level"/>
<reference key="1">
    <citation type="journal article" date="1999" name="Comp. Biochem. Physiol.">
        <title>Exoskeletal proteins from the crab, Cancer pagurus.</title>
        <authorList>
            <person name="Andersen S.O."/>
        </authorList>
    </citation>
    <scope>PROTEIN SEQUENCE</scope>
    <scope>MASS SPECTROMETRY</scope>
    <source>
        <tissue>Carapace cuticle</tissue>
    </source>
</reference>
<accession>P81582</accession>
<evidence type="ECO:0000269" key="1">
    <source>
    </source>
</evidence>
<protein>
    <recommendedName>
        <fullName>Cuticle protein CP1246</fullName>
        <shortName>CPCP1246</shortName>
    </recommendedName>
</protein>